<feature type="chain" id="PRO_0000169905" description="Galactose-1-phosphate uridylyltransferase">
    <location>
        <begin position="1"/>
        <end position="509"/>
    </location>
</feature>
<evidence type="ECO:0000255" key="1">
    <source>
        <dbReference type="HAMAP-Rule" id="MF_00571"/>
    </source>
</evidence>
<keyword id="KW-0119">Carbohydrate metabolism</keyword>
<keyword id="KW-0963">Cytoplasm</keyword>
<keyword id="KW-0299">Galactose metabolism</keyword>
<keyword id="KW-0548">Nucleotidyltransferase</keyword>
<keyword id="KW-1185">Reference proteome</keyword>
<keyword id="KW-0808">Transferase</keyword>
<sequence length="509" mass="59679">MEICSLINRLIKYALKNSLITEDDVMFVRNELMALLHLKDWQDVKENCQIPEYPQEILDKICDYAVEQKIIEDGVTDRDIFDTEIMGKFTAFPREIIETFKELSQQNIKLATDFFYNFSKKTNYIRTERIEKNLYWKSLTEYGDLEITINLSKPEKDPKEIERQKNMPQVNYPKCLLCYENVGFAGTLTHPARQNHRVIPLTLDNERWYFQYSPYVYYNEHAIIFCSEHREMKINRDTFSRTLDFINQFPHYFIGSNADLPIVGGSILSHDHYQGGNHEFPMAKSEIEKEVIFDKYPNIKAGIVKWPMSVLRLKSLNRKDLVDLADKTLKAWREYSDEEVGVFAYTNSTPHNTITPIARKRGDYFEIDLVLRNNRTDEANPLGIFHPHSEHHNIKKENIGLIEVMGLAVLPGRLKFEMRKIAEYLKDEDFEKKISDDKDTAKHLTWLKAFINKYSNLKTLSVDEILENILNVEIGLTFSRVLEDAGVFKRDEKGKNAFLKFINHIGGRF</sequence>
<proteinExistence type="inferred from homology"/>
<name>GALT_FUSNN</name>
<dbReference type="EC" id="2.7.7.12" evidence="1"/>
<dbReference type="EMBL" id="AE009951">
    <property type="protein sequence ID" value="AAL94192.1"/>
    <property type="molecule type" value="Genomic_DNA"/>
</dbReference>
<dbReference type="RefSeq" id="NP_602893.1">
    <property type="nucleotide sequence ID" value="NC_003454.1"/>
</dbReference>
<dbReference type="RefSeq" id="WP_011016044.1">
    <property type="nucleotide sequence ID" value="NZ_OZ209243.1"/>
</dbReference>
<dbReference type="FunCoup" id="Q8RHC9">
    <property type="interactions" value="21"/>
</dbReference>
<dbReference type="STRING" id="190304.FN2108"/>
<dbReference type="PaxDb" id="190304-FN2108"/>
<dbReference type="EnsemblBacteria" id="AAL94192">
    <property type="protein sequence ID" value="AAL94192"/>
    <property type="gene ID" value="FN2108"/>
</dbReference>
<dbReference type="KEGG" id="fnu:FN2108"/>
<dbReference type="PATRIC" id="fig|190304.8.peg.570"/>
<dbReference type="eggNOG" id="COG4468">
    <property type="taxonomic scope" value="Bacteria"/>
</dbReference>
<dbReference type="HOGENOM" id="CLU_047799_0_0_0"/>
<dbReference type="InParanoid" id="Q8RHC9"/>
<dbReference type="BioCyc" id="FNUC190304:G1FZS-593-MONOMER"/>
<dbReference type="UniPathway" id="UPA00214"/>
<dbReference type="Proteomes" id="UP000002521">
    <property type="component" value="Chromosome"/>
</dbReference>
<dbReference type="GO" id="GO:0005737">
    <property type="term" value="C:cytoplasm"/>
    <property type="evidence" value="ECO:0007669"/>
    <property type="project" value="UniProtKB-SubCell"/>
</dbReference>
<dbReference type="GO" id="GO:0008108">
    <property type="term" value="F:UDP-glucose:hexose-1-phosphate uridylyltransferase activity"/>
    <property type="evidence" value="ECO:0007669"/>
    <property type="project" value="UniProtKB-UniRule"/>
</dbReference>
<dbReference type="GO" id="GO:0006012">
    <property type="term" value="P:galactose metabolic process"/>
    <property type="evidence" value="ECO:0007669"/>
    <property type="project" value="UniProtKB-UniRule"/>
</dbReference>
<dbReference type="HAMAP" id="MF_00571">
    <property type="entry name" value="GalP_UDP_trans"/>
    <property type="match status" value="1"/>
</dbReference>
<dbReference type="InterPro" id="IPR000766">
    <property type="entry name" value="GalP_uridyl_Trfase_II"/>
</dbReference>
<dbReference type="InterPro" id="IPR023425">
    <property type="entry name" value="GalP_uridyl_Trfase_II_CS"/>
</dbReference>
<dbReference type="InterPro" id="IPR005850">
    <property type="entry name" value="GalP_Utransf_C"/>
</dbReference>
<dbReference type="InterPro" id="IPR005849">
    <property type="entry name" value="GalP_Utransf_N"/>
</dbReference>
<dbReference type="NCBIfam" id="NF003629">
    <property type="entry name" value="PRK05270.1-2"/>
    <property type="match status" value="1"/>
</dbReference>
<dbReference type="PANTHER" id="PTHR39191:SF1">
    <property type="entry name" value="DUF4922 DOMAIN-CONTAINING PROTEIN"/>
    <property type="match status" value="1"/>
</dbReference>
<dbReference type="PANTHER" id="PTHR39191">
    <property type="entry name" value="GALACTOSE-1-PHOSPHATE URIDYLYLTRANSFERASE"/>
    <property type="match status" value="1"/>
</dbReference>
<dbReference type="Pfam" id="PF02744">
    <property type="entry name" value="GalP_UDP_tr_C"/>
    <property type="match status" value="1"/>
</dbReference>
<dbReference type="Pfam" id="PF01087">
    <property type="entry name" value="GalP_UDP_transf"/>
    <property type="match status" value="1"/>
</dbReference>
<dbReference type="PIRSF" id="PIRSF006005">
    <property type="entry name" value="GalT_BS"/>
    <property type="match status" value="1"/>
</dbReference>
<dbReference type="PROSITE" id="PS01163">
    <property type="entry name" value="GAL_P_UDP_TRANSF_II"/>
    <property type="match status" value="1"/>
</dbReference>
<protein>
    <recommendedName>
        <fullName evidence="1">Galactose-1-phosphate uridylyltransferase</fullName>
        <shortName evidence="1">Gal-1-P uridylyltransferase</shortName>
        <ecNumber evidence="1">2.7.7.12</ecNumber>
    </recommendedName>
    <alternativeName>
        <fullName evidence="1">UDP-glucose--hexose-1-phosphate uridylyltransferase</fullName>
    </alternativeName>
</protein>
<organism>
    <name type="scientific">Fusobacterium nucleatum subsp. nucleatum (strain ATCC 25586 / DSM 15643 / BCRC 10681 / CIP 101130 / JCM 8532 / KCTC 2640 / LMG 13131 / VPI 4355)</name>
    <dbReference type="NCBI Taxonomy" id="190304"/>
    <lineage>
        <taxon>Bacteria</taxon>
        <taxon>Fusobacteriati</taxon>
        <taxon>Fusobacteriota</taxon>
        <taxon>Fusobacteriia</taxon>
        <taxon>Fusobacteriales</taxon>
        <taxon>Fusobacteriaceae</taxon>
        <taxon>Fusobacterium</taxon>
    </lineage>
</organism>
<comment type="catalytic activity">
    <reaction evidence="1">
        <text>alpha-D-galactose 1-phosphate + UDP-alpha-D-glucose = alpha-D-glucose 1-phosphate + UDP-alpha-D-galactose</text>
        <dbReference type="Rhea" id="RHEA:13989"/>
        <dbReference type="ChEBI" id="CHEBI:58336"/>
        <dbReference type="ChEBI" id="CHEBI:58601"/>
        <dbReference type="ChEBI" id="CHEBI:58885"/>
        <dbReference type="ChEBI" id="CHEBI:66914"/>
        <dbReference type="EC" id="2.7.7.12"/>
    </reaction>
</comment>
<comment type="pathway">
    <text evidence="1">Carbohydrate metabolism; galactose metabolism.</text>
</comment>
<comment type="subcellular location">
    <subcellularLocation>
        <location evidence="1">Cytoplasm</location>
    </subcellularLocation>
</comment>
<comment type="similarity">
    <text evidence="1">Belongs to the galactose-1-phosphate uridylyltransferase type 2 family.</text>
</comment>
<gene>
    <name evidence="1" type="primary">galT</name>
    <name type="ordered locus">FN2108</name>
</gene>
<accession>Q8RHC9</accession>
<reference key="1">
    <citation type="journal article" date="2002" name="J. Bacteriol.">
        <title>Genome sequence and analysis of the oral bacterium Fusobacterium nucleatum strain ATCC 25586.</title>
        <authorList>
            <person name="Kapatral V."/>
            <person name="Anderson I."/>
            <person name="Ivanova N."/>
            <person name="Reznik G."/>
            <person name="Los T."/>
            <person name="Lykidis A."/>
            <person name="Bhattacharyya A."/>
            <person name="Bartman A."/>
            <person name="Gardner W."/>
            <person name="Grechkin G."/>
            <person name="Zhu L."/>
            <person name="Vasieva O."/>
            <person name="Chu L."/>
            <person name="Kogan Y."/>
            <person name="Chaga O."/>
            <person name="Goltsman E."/>
            <person name="Bernal A."/>
            <person name="Larsen N."/>
            <person name="D'Souza M."/>
            <person name="Walunas T."/>
            <person name="Pusch G."/>
            <person name="Haselkorn R."/>
            <person name="Fonstein M."/>
            <person name="Kyrpides N.C."/>
            <person name="Overbeek R."/>
        </authorList>
    </citation>
    <scope>NUCLEOTIDE SEQUENCE [LARGE SCALE GENOMIC DNA]</scope>
    <source>
        <strain>ATCC 25586 / DSM 15643 / BCRC 10681 / CIP 101130 / JCM 8532 / KCTC 2640 / LMG 13131 / VPI 4355</strain>
    </source>
</reference>